<proteinExistence type="inferred from homology"/>
<protein>
    <recommendedName>
        <fullName evidence="1">Small ribosomal subunit protein uS19</fullName>
    </recommendedName>
    <alternativeName>
        <fullName evidence="2">30S ribosomal protein S19</fullName>
    </alternativeName>
</protein>
<name>RS19_BRADU</name>
<dbReference type="EMBL" id="BA000040">
    <property type="protein sequence ID" value="BAC50661.1"/>
    <property type="molecule type" value="Genomic_DNA"/>
</dbReference>
<dbReference type="RefSeq" id="NP_772036.1">
    <property type="nucleotide sequence ID" value="NC_004463.1"/>
</dbReference>
<dbReference type="RefSeq" id="WP_008136357.1">
    <property type="nucleotide sequence ID" value="NZ_CP011360.1"/>
</dbReference>
<dbReference type="SMR" id="Q89J88"/>
<dbReference type="FunCoup" id="Q89J88">
    <property type="interactions" value="669"/>
</dbReference>
<dbReference type="STRING" id="224911.AAV28_24390"/>
<dbReference type="EnsemblBacteria" id="BAC50661">
    <property type="protein sequence ID" value="BAC50661"/>
    <property type="gene ID" value="BAC50661"/>
</dbReference>
<dbReference type="GeneID" id="93215320"/>
<dbReference type="KEGG" id="bja:bsl5396"/>
<dbReference type="PATRIC" id="fig|224911.44.peg.5295"/>
<dbReference type="eggNOG" id="COG0185">
    <property type="taxonomic scope" value="Bacteria"/>
</dbReference>
<dbReference type="HOGENOM" id="CLU_144911_0_1_5"/>
<dbReference type="InParanoid" id="Q89J88"/>
<dbReference type="OrthoDB" id="9797833at2"/>
<dbReference type="PhylomeDB" id="Q89J88"/>
<dbReference type="Proteomes" id="UP000002526">
    <property type="component" value="Chromosome"/>
</dbReference>
<dbReference type="GO" id="GO:0005737">
    <property type="term" value="C:cytoplasm"/>
    <property type="evidence" value="ECO:0007669"/>
    <property type="project" value="UniProtKB-ARBA"/>
</dbReference>
<dbReference type="GO" id="GO:0015935">
    <property type="term" value="C:small ribosomal subunit"/>
    <property type="evidence" value="ECO:0007669"/>
    <property type="project" value="InterPro"/>
</dbReference>
<dbReference type="GO" id="GO:0019843">
    <property type="term" value="F:rRNA binding"/>
    <property type="evidence" value="ECO:0007669"/>
    <property type="project" value="UniProtKB-UniRule"/>
</dbReference>
<dbReference type="GO" id="GO:0003735">
    <property type="term" value="F:structural constituent of ribosome"/>
    <property type="evidence" value="ECO:0000318"/>
    <property type="project" value="GO_Central"/>
</dbReference>
<dbReference type="GO" id="GO:0000028">
    <property type="term" value="P:ribosomal small subunit assembly"/>
    <property type="evidence" value="ECO:0000318"/>
    <property type="project" value="GO_Central"/>
</dbReference>
<dbReference type="GO" id="GO:0006412">
    <property type="term" value="P:translation"/>
    <property type="evidence" value="ECO:0007669"/>
    <property type="project" value="UniProtKB-UniRule"/>
</dbReference>
<dbReference type="FunFam" id="3.30.860.10:FF:000001">
    <property type="entry name" value="30S ribosomal protein S19"/>
    <property type="match status" value="1"/>
</dbReference>
<dbReference type="Gene3D" id="3.30.860.10">
    <property type="entry name" value="30s Ribosomal Protein S19, Chain A"/>
    <property type="match status" value="1"/>
</dbReference>
<dbReference type="HAMAP" id="MF_00531">
    <property type="entry name" value="Ribosomal_uS19"/>
    <property type="match status" value="1"/>
</dbReference>
<dbReference type="InterPro" id="IPR002222">
    <property type="entry name" value="Ribosomal_uS19"/>
</dbReference>
<dbReference type="InterPro" id="IPR005732">
    <property type="entry name" value="Ribosomal_uS19_bac-type"/>
</dbReference>
<dbReference type="InterPro" id="IPR020934">
    <property type="entry name" value="Ribosomal_uS19_CS"/>
</dbReference>
<dbReference type="InterPro" id="IPR023575">
    <property type="entry name" value="Ribosomal_uS19_SF"/>
</dbReference>
<dbReference type="NCBIfam" id="TIGR01050">
    <property type="entry name" value="rpsS_bact"/>
    <property type="match status" value="1"/>
</dbReference>
<dbReference type="PANTHER" id="PTHR11880">
    <property type="entry name" value="RIBOSOMAL PROTEIN S19P FAMILY MEMBER"/>
    <property type="match status" value="1"/>
</dbReference>
<dbReference type="PANTHER" id="PTHR11880:SF8">
    <property type="entry name" value="SMALL RIBOSOMAL SUBUNIT PROTEIN US19M"/>
    <property type="match status" value="1"/>
</dbReference>
<dbReference type="Pfam" id="PF00203">
    <property type="entry name" value="Ribosomal_S19"/>
    <property type="match status" value="1"/>
</dbReference>
<dbReference type="PIRSF" id="PIRSF002144">
    <property type="entry name" value="Ribosomal_S19"/>
    <property type="match status" value="1"/>
</dbReference>
<dbReference type="PRINTS" id="PR00975">
    <property type="entry name" value="RIBOSOMALS19"/>
</dbReference>
<dbReference type="SUPFAM" id="SSF54570">
    <property type="entry name" value="Ribosomal protein S19"/>
    <property type="match status" value="1"/>
</dbReference>
<dbReference type="PROSITE" id="PS00323">
    <property type="entry name" value="RIBOSOMAL_S19"/>
    <property type="match status" value="1"/>
</dbReference>
<sequence length="92" mass="10204">MVRSVWKGPFVEGSLLKKADAARASGRHDVIKIWSRRSTILPQFVGLTFGVYNGQKHVPVAVNEEMVGHKFGEFSPTRTFHGHSGDKKAKKA</sequence>
<evidence type="ECO:0000255" key="1">
    <source>
        <dbReference type="HAMAP-Rule" id="MF_00531"/>
    </source>
</evidence>
<evidence type="ECO:0000305" key="2"/>
<feature type="chain" id="PRO_0000129791" description="Small ribosomal subunit protein uS19">
    <location>
        <begin position="1"/>
        <end position="92"/>
    </location>
</feature>
<comment type="function">
    <text evidence="1">Protein S19 forms a complex with S13 that binds strongly to the 16S ribosomal RNA.</text>
</comment>
<comment type="similarity">
    <text evidence="1">Belongs to the universal ribosomal protein uS19 family.</text>
</comment>
<gene>
    <name evidence="1" type="primary">rpsS</name>
    <name type="ordered locus">bsl5396</name>
</gene>
<organism>
    <name type="scientific">Bradyrhizobium diazoefficiens (strain JCM 10833 / BCRC 13528 / IAM 13628 / NBRC 14792 / USDA 110)</name>
    <dbReference type="NCBI Taxonomy" id="224911"/>
    <lineage>
        <taxon>Bacteria</taxon>
        <taxon>Pseudomonadati</taxon>
        <taxon>Pseudomonadota</taxon>
        <taxon>Alphaproteobacteria</taxon>
        <taxon>Hyphomicrobiales</taxon>
        <taxon>Nitrobacteraceae</taxon>
        <taxon>Bradyrhizobium</taxon>
    </lineage>
</organism>
<accession>Q89J88</accession>
<reference key="1">
    <citation type="journal article" date="2002" name="DNA Res.">
        <title>Complete genomic sequence of nitrogen-fixing symbiotic bacterium Bradyrhizobium japonicum USDA110.</title>
        <authorList>
            <person name="Kaneko T."/>
            <person name="Nakamura Y."/>
            <person name="Sato S."/>
            <person name="Minamisawa K."/>
            <person name="Uchiumi T."/>
            <person name="Sasamoto S."/>
            <person name="Watanabe A."/>
            <person name="Idesawa K."/>
            <person name="Iriguchi M."/>
            <person name="Kawashima K."/>
            <person name="Kohara M."/>
            <person name="Matsumoto M."/>
            <person name="Shimpo S."/>
            <person name="Tsuruoka H."/>
            <person name="Wada T."/>
            <person name="Yamada M."/>
            <person name="Tabata S."/>
        </authorList>
    </citation>
    <scope>NUCLEOTIDE SEQUENCE [LARGE SCALE GENOMIC DNA]</scope>
    <source>
        <strain>JCM 10833 / BCRC 13528 / IAM 13628 / NBRC 14792 / USDA 110</strain>
    </source>
</reference>
<keyword id="KW-1185">Reference proteome</keyword>
<keyword id="KW-0687">Ribonucleoprotein</keyword>
<keyword id="KW-0689">Ribosomal protein</keyword>
<keyword id="KW-0694">RNA-binding</keyword>
<keyword id="KW-0699">rRNA-binding</keyword>